<sequence>MAAGLFGLSARRLLAAAATRGLPAARVRWESSFSRTVVAPSAVAGKRPPEPTTPWQEDPEPEDENLYEKNPDSHGYDKDPVLDVWNMRLVFFFGVSIILVLGSTFVAYLPDYRMKEWSRREAERLVKYREANGLPIMESNCFDPSKIQLPEDE</sequence>
<feature type="transit peptide" description="Mitochondrion" evidence="1">
    <location>
        <begin position="1"/>
        <end position="29"/>
    </location>
</feature>
<feature type="chain" id="PRO_0000020057" description="NADH dehydrogenase [ubiquinone] 1 beta subcomplex subunit 11, mitochondrial">
    <location>
        <begin position="30"/>
        <end position="153"/>
    </location>
</feature>
<feature type="transmembrane region" description="Helical" evidence="2">
    <location>
        <begin position="89"/>
        <end position="109"/>
    </location>
</feature>
<feature type="region of interest" description="Disordered" evidence="3">
    <location>
        <begin position="40"/>
        <end position="76"/>
    </location>
</feature>
<feature type="compositionally biased region" description="Basic and acidic residues" evidence="3">
    <location>
        <begin position="66"/>
        <end position="76"/>
    </location>
</feature>
<feature type="splice variant" id="VSP_018251" description="In isoform 2." evidence="10 11">
    <original>R</original>
    <variation>RCTGCPRAWDG</variation>
    <location>
        <position position="113"/>
    </location>
</feature>
<feature type="sequence variant" id="VAR_078941" description="Found in a patient with histiocytoid cardiomyopathy; uncertain significance." evidence="6">
    <location>
        <begin position="85"/>
        <end position="153"/>
    </location>
</feature>
<feature type="sequence variant" id="VAR_078942" description="Found in a patient with histiocytoid cardiomyopathy; uncertain significance." evidence="6">
    <location>
        <begin position="108"/>
        <end position="153"/>
    </location>
</feature>
<feature type="sequence variant" id="VAR_076277" description="In MC1DN30; dbSNP:rs1057519073." evidence="7">
    <original>E</original>
    <variation>K</variation>
    <location>
        <position position="121"/>
    </location>
</feature>
<feature type="sequence conflict" description="In Ref. 1; AAL32064." evidence="12" ref="1">
    <original>L</original>
    <variation>P</variation>
    <location>
        <position position="13"/>
    </location>
</feature>
<feature type="sequence conflict" description="In Ref. 5; CAG33520." evidence="12" ref="5">
    <original>E</original>
    <variation>D</variation>
    <location>
        <position position="153"/>
    </location>
</feature>
<protein>
    <recommendedName>
        <fullName>NADH dehydrogenase [ubiquinone] 1 beta subcomplex subunit 11, mitochondrial</fullName>
    </recommendedName>
    <alternativeName>
        <fullName>Complex I-ESSS</fullName>
        <shortName>CI-ESSS</shortName>
    </alternativeName>
    <alternativeName>
        <fullName>NADH-ubiquinone oxidoreductase ESSS subunit</fullName>
    </alternativeName>
    <alternativeName>
        <fullName>Neuronal protein 17.3</fullName>
        <shortName>Np17.3</shortName>
        <shortName>p17.3</shortName>
    </alternativeName>
</protein>
<proteinExistence type="evidence at protein level"/>
<reference key="1">
    <citation type="journal article" date="1999" name="Biochem. Genet.">
        <title>Cloning and tissue expressional characterization of a full-length cDNA encoding human neuronal protein P17.3.</title>
        <authorList>
            <person name="Cui Y."/>
            <person name="Yu L."/>
            <person name="Gong R."/>
            <person name="Zhang M."/>
            <person name="Fan Y."/>
            <person name="Yue P."/>
            <person name="Zhao S."/>
        </authorList>
    </citation>
    <scope>NUCLEOTIDE SEQUENCE [MRNA] (ISOFORM 1)</scope>
    <source>
        <tissue>Fetal brain</tissue>
    </source>
</reference>
<reference key="2">
    <citation type="submission" date="2000-03" db="EMBL/GenBank/DDBJ databases">
        <authorList>
            <person name="Mao Y."/>
            <person name="Xie Y."/>
            <person name="Zhou Z."/>
            <person name="Zhao W."/>
            <person name="Zhao S."/>
            <person name="Wang W."/>
            <person name="Huang Y."/>
            <person name="Wang S."/>
            <person name="Tang R."/>
            <person name="Chen X."/>
            <person name="Wu C."/>
        </authorList>
    </citation>
    <scope>NUCLEOTIDE SEQUENCE [MRNA] (ISOFORM 2)</scope>
</reference>
<reference key="3">
    <citation type="journal article" date="2004" name="Nat. Genet.">
        <title>Complete sequencing and characterization of 21,243 full-length human cDNAs.</title>
        <authorList>
            <person name="Ota T."/>
            <person name="Suzuki Y."/>
            <person name="Nishikawa T."/>
            <person name="Otsuki T."/>
            <person name="Sugiyama T."/>
            <person name="Irie R."/>
            <person name="Wakamatsu A."/>
            <person name="Hayashi K."/>
            <person name="Sato H."/>
            <person name="Nagai K."/>
            <person name="Kimura K."/>
            <person name="Makita H."/>
            <person name="Sekine M."/>
            <person name="Obayashi M."/>
            <person name="Nishi T."/>
            <person name="Shibahara T."/>
            <person name="Tanaka T."/>
            <person name="Ishii S."/>
            <person name="Yamamoto J."/>
            <person name="Saito K."/>
            <person name="Kawai Y."/>
            <person name="Isono Y."/>
            <person name="Nakamura Y."/>
            <person name="Nagahari K."/>
            <person name="Murakami K."/>
            <person name="Yasuda T."/>
            <person name="Iwayanagi T."/>
            <person name="Wagatsuma M."/>
            <person name="Shiratori A."/>
            <person name="Sudo H."/>
            <person name="Hosoiri T."/>
            <person name="Kaku Y."/>
            <person name="Kodaira H."/>
            <person name="Kondo H."/>
            <person name="Sugawara M."/>
            <person name="Takahashi M."/>
            <person name="Kanda K."/>
            <person name="Yokoi T."/>
            <person name="Furuya T."/>
            <person name="Kikkawa E."/>
            <person name="Omura Y."/>
            <person name="Abe K."/>
            <person name="Kamihara K."/>
            <person name="Katsuta N."/>
            <person name="Sato K."/>
            <person name="Tanikawa M."/>
            <person name="Yamazaki M."/>
            <person name="Ninomiya K."/>
            <person name="Ishibashi T."/>
            <person name="Yamashita H."/>
            <person name="Murakawa K."/>
            <person name="Fujimori K."/>
            <person name="Tanai H."/>
            <person name="Kimata M."/>
            <person name="Watanabe M."/>
            <person name="Hiraoka S."/>
            <person name="Chiba Y."/>
            <person name="Ishida S."/>
            <person name="Ono Y."/>
            <person name="Takiguchi S."/>
            <person name="Watanabe S."/>
            <person name="Yosida M."/>
            <person name="Hotuta T."/>
            <person name="Kusano J."/>
            <person name="Kanehori K."/>
            <person name="Takahashi-Fujii A."/>
            <person name="Hara H."/>
            <person name="Tanase T.-O."/>
            <person name="Nomura Y."/>
            <person name="Togiya S."/>
            <person name="Komai F."/>
            <person name="Hara R."/>
            <person name="Takeuchi K."/>
            <person name="Arita M."/>
            <person name="Imose N."/>
            <person name="Musashino K."/>
            <person name="Yuuki H."/>
            <person name="Oshima A."/>
            <person name="Sasaki N."/>
            <person name="Aotsuka S."/>
            <person name="Yoshikawa Y."/>
            <person name="Matsunawa H."/>
            <person name="Ichihara T."/>
            <person name="Shiohata N."/>
            <person name="Sano S."/>
            <person name="Moriya S."/>
            <person name="Momiyama H."/>
            <person name="Satoh N."/>
            <person name="Takami S."/>
            <person name="Terashima Y."/>
            <person name="Suzuki O."/>
            <person name="Nakagawa S."/>
            <person name="Senoh A."/>
            <person name="Mizoguchi H."/>
            <person name="Goto Y."/>
            <person name="Shimizu F."/>
            <person name="Wakebe H."/>
            <person name="Hishigaki H."/>
            <person name="Watanabe T."/>
            <person name="Sugiyama A."/>
            <person name="Takemoto M."/>
            <person name="Kawakami B."/>
            <person name="Yamazaki M."/>
            <person name="Watanabe K."/>
            <person name="Kumagai A."/>
            <person name="Itakura S."/>
            <person name="Fukuzumi Y."/>
            <person name="Fujimori Y."/>
            <person name="Komiyama M."/>
            <person name="Tashiro H."/>
            <person name="Tanigami A."/>
            <person name="Fujiwara T."/>
            <person name="Ono T."/>
            <person name="Yamada K."/>
            <person name="Fujii Y."/>
            <person name="Ozaki K."/>
            <person name="Hirao M."/>
            <person name="Ohmori Y."/>
            <person name="Kawabata A."/>
            <person name="Hikiji T."/>
            <person name="Kobatake N."/>
            <person name="Inagaki H."/>
            <person name="Ikema Y."/>
            <person name="Okamoto S."/>
            <person name="Okitani R."/>
            <person name="Kawakami T."/>
            <person name="Noguchi S."/>
            <person name="Itoh T."/>
            <person name="Shigeta K."/>
            <person name="Senba T."/>
            <person name="Matsumura K."/>
            <person name="Nakajima Y."/>
            <person name="Mizuno T."/>
            <person name="Morinaga M."/>
            <person name="Sasaki M."/>
            <person name="Togashi T."/>
            <person name="Oyama M."/>
            <person name="Hata H."/>
            <person name="Watanabe M."/>
            <person name="Komatsu T."/>
            <person name="Mizushima-Sugano J."/>
            <person name="Satoh T."/>
            <person name="Shirai Y."/>
            <person name="Takahashi Y."/>
            <person name="Nakagawa K."/>
            <person name="Okumura K."/>
            <person name="Nagase T."/>
            <person name="Nomura N."/>
            <person name="Kikuchi H."/>
            <person name="Masuho Y."/>
            <person name="Yamashita R."/>
            <person name="Nakai K."/>
            <person name="Yada T."/>
            <person name="Nakamura Y."/>
            <person name="Ohara O."/>
            <person name="Isogai T."/>
            <person name="Sugano S."/>
        </authorList>
    </citation>
    <scope>NUCLEOTIDE SEQUENCE [LARGE SCALE MRNA] (ISOFORM 1)</scope>
</reference>
<reference key="4">
    <citation type="journal article" date="2003" name="Genome Res.">
        <title>The secreted protein discovery initiative (SPDI), a large-scale effort to identify novel human secreted and transmembrane proteins: a bioinformatics assessment.</title>
        <authorList>
            <person name="Clark H.F."/>
            <person name="Gurney A.L."/>
            <person name="Abaya E."/>
            <person name="Baker K."/>
            <person name="Baldwin D.T."/>
            <person name="Brush J."/>
            <person name="Chen J."/>
            <person name="Chow B."/>
            <person name="Chui C."/>
            <person name="Crowley C."/>
            <person name="Currell B."/>
            <person name="Deuel B."/>
            <person name="Dowd P."/>
            <person name="Eaton D."/>
            <person name="Foster J.S."/>
            <person name="Grimaldi C."/>
            <person name="Gu Q."/>
            <person name="Hass P.E."/>
            <person name="Heldens S."/>
            <person name="Huang A."/>
            <person name="Kim H.S."/>
            <person name="Klimowski L."/>
            <person name="Jin Y."/>
            <person name="Johnson S."/>
            <person name="Lee J."/>
            <person name="Lewis L."/>
            <person name="Liao D."/>
            <person name="Mark M.R."/>
            <person name="Robbie E."/>
            <person name="Sanchez C."/>
            <person name="Schoenfeld J."/>
            <person name="Seshagiri S."/>
            <person name="Simmons L."/>
            <person name="Singh J."/>
            <person name="Smith V."/>
            <person name="Stinson J."/>
            <person name="Vagts A."/>
            <person name="Vandlen R.L."/>
            <person name="Watanabe C."/>
            <person name="Wieand D."/>
            <person name="Woods K."/>
            <person name="Xie M.-H."/>
            <person name="Yansura D.G."/>
            <person name="Yi S."/>
            <person name="Yu G."/>
            <person name="Yuan J."/>
            <person name="Zhang M."/>
            <person name="Zhang Z."/>
            <person name="Goddard A.D."/>
            <person name="Wood W.I."/>
            <person name="Godowski P.J."/>
            <person name="Gray A.M."/>
        </authorList>
    </citation>
    <scope>NUCLEOTIDE SEQUENCE [LARGE SCALE MRNA] (ISOFORM 1)</scope>
</reference>
<reference key="5">
    <citation type="submission" date="2004-06" db="EMBL/GenBank/DDBJ databases">
        <title>Cloning of human full open reading frames in Gateway(TM) system entry vector (pDONR201).</title>
        <authorList>
            <person name="Ebert L."/>
            <person name="Schick M."/>
            <person name="Neubert P."/>
            <person name="Schatten R."/>
            <person name="Henze S."/>
            <person name="Korn B."/>
        </authorList>
    </citation>
    <scope>NUCLEOTIDE SEQUENCE [LARGE SCALE MRNA] (ISOFORM 1)</scope>
</reference>
<reference key="6">
    <citation type="journal article" date="2005" name="Nature">
        <title>The DNA sequence of the human X chromosome.</title>
        <authorList>
            <person name="Ross M.T."/>
            <person name="Grafham D.V."/>
            <person name="Coffey A.J."/>
            <person name="Scherer S."/>
            <person name="McLay K."/>
            <person name="Muzny D."/>
            <person name="Platzer M."/>
            <person name="Howell G.R."/>
            <person name="Burrows C."/>
            <person name="Bird C.P."/>
            <person name="Frankish A."/>
            <person name="Lovell F.L."/>
            <person name="Howe K.L."/>
            <person name="Ashurst J.L."/>
            <person name="Fulton R.S."/>
            <person name="Sudbrak R."/>
            <person name="Wen G."/>
            <person name="Jones M.C."/>
            <person name="Hurles M.E."/>
            <person name="Andrews T.D."/>
            <person name="Scott C.E."/>
            <person name="Searle S."/>
            <person name="Ramser J."/>
            <person name="Whittaker A."/>
            <person name="Deadman R."/>
            <person name="Carter N.P."/>
            <person name="Hunt S.E."/>
            <person name="Chen R."/>
            <person name="Cree A."/>
            <person name="Gunaratne P."/>
            <person name="Havlak P."/>
            <person name="Hodgson A."/>
            <person name="Metzker M.L."/>
            <person name="Richards S."/>
            <person name="Scott G."/>
            <person name="Steffen D."/>
            <person name="Sodergren E."/>
            <person name="Wheeler D.A."/>
            <person name="Worley K.C."/>
            <person name="Ainscough R."/>
            <person name="Ambrose K.D."/>
            <person name="Ansari-Lari M.A."/>
            <person name="Aradhya S."/>
            <person name="Ashwell R.I."/>
            <person name="Babbage A.K."/>
            <person name="Bagguley C.L."/>
            <person name="Ballabio A."/>
            <person name="Banerjee R."/>
            <person name="Barker G.E."/>
            <person name="Barlow K.F."/>
            <person name="Barrett I.P."/>
            <person name="Bates K.N."/>
            <person name="Beare D.M."/>
            <person name="Beasley H."/>
            <person name="Beasley O."/>
            <person name="Beck A."/>
            <person name="Bethel G."/>
            <person name="Blechschmidt K."/>
            <person name="Brady N."/>
            <person name="Bray-Allen S."/>
            <person name="Bridgeman A.M."/>
            <person name="Brown A.J."/>
            <person name="Brown M.J."/>
            <person name="Bonnin D."/>
            <person name="Bruford E.A."/>
            <person name="Buhay C."/>
            <person name="Burch P."/>
            <person name="Burford D."/>
            <person name="Burgess J."/>
            <person name="Burrill W."/>
            <person name="Burton J."/>
            <person name="Bye J.M."/>
            <person name="Carder C."/>
            <person name="Carrel L."/>
            <person name="Chako J."/>
            <person name="Chapman J.C."/>
            <person name="Chavez D."/>
            <person name="Chen E."/>
            <person name="Chen G."/>
            <person name="Chen Y."/>
            <person name="Chen Z."/>
            <person name="Chinault C."/>
            <person name="Ciccodicola A."/>
            <person name="Clark S.Y."/>
            <person name="Clarke G."/>
            <person name="Clee C.M."/>
            <person name="Clegg S."/>
            <person name="Clerc-Blankenburg K."/>
            <person name="Clifford K."/>
            <person name="Cobley V."/>
            <person name="Cole C.G."/>
            <person name="Conquer J.S."/>
            <person name="Corby N."/>
            <person name="Connor R.E."/>
            <person name="David R."/>
            <person name="Davies J."/>
            <person name="Davis C."/>
            <person name="Davis J."/>
            <person name="Delgado O."/>
            <person name="Deshazo D."/>
            <person name="Dhami P."/>
            <person name="Ding Y."/>
            <person name="Dinh H."/>
            <person name="Dodsworth S."/>
            <person name="Draper H."/>
            <person name="Dugan-Rocha S."/>
            <person name="Dunham A."/>
            <person name="Dunn M."/>
            <person name="Durbin K.J."/>
            <person name="Dutta I."/>
            <person name="Eades T."/>
            <person name="Ellwood M."/>
            <person name="Emery-Cohen A."/>
            <person name="Errington H."/>
            <person name="Evans K.L."/>
            <person name="Faulkner L."/>
            <person name="Francis F."/>
            <person name="Frankland J."/>
            <person name="Fraser A.E."/>
            <person name="Galgoczy P."/>
            <person name="Gilbert J."/>
            <person name="Gill R."/>
            <person name="Gloeckner G."/>
            <person name="Gregory S.G."/>
            <person name="Gribble S."/>
            <person name="Griffiths C."/>
            <person name="Grocock R."/>
            <person name="Gu Y."/>
            <person name="Gwilliam R."/>
            <person name="Hamilton C."/>
            <person name="Hart E.A."/>
            <person name="Hawes A."/>
            <person name="Heath P.D."/>
            <person name="Heitmann K."/>
            <person name="Hennig S."/>
            <person name="Hernandez J."/>
            <person name="Hinzmann B."/>
            <person name="Ho S."/>
            <person name="Hoffs M."/>
            <person name="Howden P.J."/>
            <person name="Huckle E.J."/>
            <person name="Hume J."/>
            <person name="Hunt P.J."/>
            <person name="Hunt A.R."/>
            <person name="Isherwood J."/>
            <person name="Jacob L."/>
            <person name="Johnson D."/>
            <person name="Jones S."/>
            <person name="de Jong P.J."/>
            <person name="Joseph S.S."/>
            <person name="Keenan S."/>
            <person name="Kelly S."/>
            <person name="Kershaw J.K."/>
            <person name="Khan Z."/>
            <person name="Kioschis P."/>
            <person name="Klages S."/>
            <person name="Knights A.J."/>
            <person name="Kosiura A."/>
            <person name="Kovar-Smith C."/>
            <person name="Laird G.K."/>
            <person name="Langford C."/>
            <person name="Lawlor S."/>
            <person name="Leversha M."/>
            <person name="Lewis L."/>
            <person name="Liu W."/>
            <person name="Lloyd C."/>
            <person name="Lloyd D.M."/>
            <person name="Loulseged H."/>
            <person name="Loveland J.E."/>
            <person name="Lovell J.D."/>
            <person name="Lozado R."/>
            <person name="Lu J."/>
            <person name="Lyne R."/>
            <person name="Ma J."/>
            <person name="Maheshwari M."/>
            <person name="Matthews L.H."/>
            <person name="McDowall J."/>
            <person name="McLaren S."/>
            <person name="McMurray A."/>
            <person name="Meidl P."/>
            <person name="Meitinger T."/>
            <person name="Milne S."/>
            <person name="Miner G."/>
            <person name="Mistry S.L."/>
            <person name="Morgan M."/>
            <person name="Morris S."/>
            <person name="Mueller I."/>
            <person name="Mullikin J.C."/>
            <person name="Nguyen N."/>
            <person name="Nordsiek G."/>
            <person name="Nyakatura G."/>
            <person name="O'dell C.N."/>
            <person name="Okwuonu G."/>
            <person name="Palmer S."/>
            <person name="Pandian R."/>
            <person name="Parker D."/>
            <person name="Parrish J."/>
            <person name="Pasternak S."/>
            <person name="Patel D."/>
            <person name="Pearce A.V."/>
            <person name="Pearson D.M."/>
            <person name="Pelan S.E."/>
            <person name="Perez L."/>
            <person name="Porter K.M."/>
            <person name="Ramsey Y."/>
            <person name="Reichwald K."/>
            <person name="Rhodes S."/>
            <person name="Ridler K.A."/>
            <person name="Schlessinger D."/>
            <person name="Schueler M.G."/>
            <person name="Sehra H.K."/>
            <person name="Shaw-Smith C."/>
            <person name="Shen H."/>
            <person name="Sheridan E.M."/>
            <person name="Shownkeen R."/>
            <person name="Skuce C.D."/>
            <person name="Smith M.L."/>
            <person name="Sotheran E.C."/>
            <person name="Steingruber H.E."/>
            <person name="Steward C.A."/>
            <person name="Storey R."/>
            <person name="Swann R.M."/>
            <person name="Swarbreck D."/>
            <person name="Tabor P.E."/>
            <person name="Taudien S."/>
            <person name="Taylor T."/>
            <person name="Teague B."/>
            <person name="Thomas K."/>
            <person name="Thorpe A."/>
            <person name="Timms K."/>
            <person name="Tracey A."/>
            <person name="Trevanion S."/>
            <person name="Tromans A.C."/>
            <person name="d'Urso M."/>
            <person name="Verduzco D."/>
            <person name="Villasana D."/>
            <person name="Waldron L."/>
            <person name="Wall M."/>
            <person name="Wang Q."/>
            <person name="Warren J."/>
            <person name="Warry G.L."/>
            <person name="Wei X."/>
            <person name="West A."/>
            <person name="Whitehead S.L."/>
            <person name="Whiteley M.N."/>
            <person name="Wilkinson J.E."/>
            <person name="Willey D.L."/>
            <person name="Williams G."/>
            <person name="Williams L."/>
            <person name="Williamson A."/>
            <person name="Williamson H."/>
            <person name="Wilming L."/>
            <person name="Woodmansey R.L."/>
            <person name="Wray P.W."/>
            <person name="Yen J."/>
            <person name="Zhang J."/>
            <person name="Zhou J."/>
            <person name="Zoghbi H."/>
            <person name="Zorilla S."/>
            <person name="Buck D."/>
            <person name="Reinhardt R."/>
            <person name="Poustka A."/>
            <person name="Rosenthal A."/>
            <person name="Lehrach H."/>
            <person name="Meindl A."/>
            <person name="Minx P.J."/>
            <person name="Hillier L.W."/>
            <person name="Willard H.F."/>
            <person name="Wilson R.K."/>
            <person name="Waterston R.H."/>
            <person name="Rice C.M."/>
            <person name="Vaudin M."/>
            <person name="Coulson A."/>
            <person name="Nelson D.L."/>
            <person name="Weinstock G."/>
            <person name="Sulston J.E."/>
            <person name="Durbin R.M."/>
            <person name="Hubbard T."/>
            <person name="Gibbs R.A."/>
            <person name="Beck S."/>
            <person name="Rogers J."/>
            <person name="Bentley D.R."/>
        </authorList>
    </citation>
    <scope>NUCLEOTIDE SEQUENCE [LARGE SCALE GENOMIC DNA]</scope>
</reference>
<reference key="7">
    <citation type="journal article" date="2004" name="Genome Res.">
        <title>The status, quality, and expansion of the NIH full-length cDNA project: the Mammalian Gene Collection (MGC).</title>
        <authorList>
            <consortium name="The MGC Project Team"/>
        </authorList>
    </citation>
    <scope>NUCLEOTIDE SEQUENCE [LARGE SCALE MRNA] (ISOFORMS 1 AND 2)</scope>
    <source>
        <tissue>Eye</tissue>
    </source>
</reference>
<reference key="8">
    <citation type="journal article" date="2003" name="J. Biol. Chem.">
        <title>The subunit composition of the human NADH dehydrogenase obtained by rapid one-step immunopurification.</title>
        <authorList>
            <person name="Murray J."/>
            <person name="Zhang B."/>
            <person name="Taylor S.W."/>
            <person name="Oglesbee D."/>
            <person name="Fahy E."/>
            <person name="Marusich M.F."/>
            <person name="Ghosh S.S."/>
            <person name="Capaldi R.A."/>
        </authorList>
    </citation>
    <scope>IDENTIFICATION IN THE NADH-UBIQUINONE OXIDOREDUCTASE COMPLEX</scope>
    <scope>IDENTIFICATION BY MASS SPECTROMETRY</scope>
</reference>
<reference key="9">
    <citation type="journal article" date="2011" name="BMC Syst. Biol.">
        <title>Initial characterization of the human central proteome.</title>
        <authorList>
            <person name="Burkard T.R."/>
            <person name="Planyavsky M."/>
            <person name="Kaupe I."/>
            <person name="Breitwieser F.P."/>
            <person name="Buerckstuemmer T."/>
            <person name="Bennett K.L."/>
            <person name="Superti-Furga G."/>
            <person name="Colinge J."/>
        </authorList>
    </citation>
    <scope>IDENTIFICATION BY MASS SPECTROMETRY [LARGE SCALE ANALYSIS]</scope>
</reference>
<reference key="10">
    <citation type="journal article" date="2014" name="J. Proteomics">
        <title>An enzyme assisted RP-RPLC approach for in-depth analysis of human liver phosphoproteome.</title>
        <authorList>
            <person name="Bian Y."/>
            <person name="Song C."/>
            <person name="Cheng K."/>
            <person name="Dong M."/>
            <person name="Wang F."/>
            <person name="Huang J."/>
            <person name="Sun D."/>
            <person name="Wang L."/>
            <person name="Ye M."/>
            <person name="Zou H."/>
        </authorList>
    </citation>
    <scope>IDENTIFICATION BY MASS SPECTROMETRY [LARGE SCALE ANALYSIS]</scope>
    <source>
        <tissue>Liver</tissue>
    </source>
</reference>
<reference key="11">
    <citation type="journal article" date="2015" name="Am. J. Hum. Genet.">
        <title>Mutations in NDUFB11, encoding a complex I component of the mitochondrial respiratory chain, cause microphthalmia with linear skin defects syndrome.</title>
        <authorList>
            <person name="van Rahden V.A."/>
            <person name="Fernandez-Vizarra E."/>
            <person name="Alawi M."/>
            <person name="Brand K."/>
            <person name="Fellmann F."/>
            <person name="Horn D."/>
            <person name="Zeviani M."/>
            <person name="Kutsche K."/>
        </authorList>
    </citation>
    <scope>INVOLVEMENT IN LSDMCA3</scope>
</reference>
<reference key="12">
    <citation type="journal article" date="2015" name="Proteomics">
        <title>N-terminome analysis of the human mitochondrial proteome.</title>
        <authorList>
            <person name="Vaca Jacome A.S."/>
            <person name="Rabilloud T."/>
            <person name="Schaeffer-Reiss C."/>
            <person name="Rompais M."/>
            <person name="Ayoub D."/>
            <person name="Lane L."/>
            <person name="Bairoch A."/>
            <person name="Van Dorsselaer A."/>
            <person name="Carapito C."/>
        </authorList>
    </citation>
    <scope>IDENTIFICATION BY MASS SPECTROMETRY [LARGE SCALE ANALYSIS]</scope>
</reference>
<reference key="13">
    <citation type="journal article" date="2015" name="Am. J. Med. Genet. A">
        <title>Exome sequencing of patients with histiocytoid cardiomyopathy reveals a de novo NDUFB11 mutation that plays a role in the pathogenesis of histiocytoid cardiomyopathy.</title>
        <authorList>
            <person name="Shehata B.M."/>
            <person name="Cundiff C.A."/>
            <person name="Lee K."/>
            <person name="Sabharwal A."/>
            <person name="Lalwani M.K."/>
            <person name="Davis A.K."/>
            <person name="Agrawal V."/>
            <person name="Sivasubbu S."/>
            <person name="Iannucci G.J."/>
            <person name="Gibson G."/>
        </authorList>
    </citation>
    <scope>VARIANTS 85-TRP--GLU-153 DEL AND 108-TYR--GLU-153 DEL</scope>
</reference>
<reference key="14">
    <citation type="journal article" date="2016" name="Nature">
        <title>Accessory subunits are integral for assembly and function of human mitochondrial complex I.</title>
        <authorList>
            <person name="Stroud D.A."/>
            <person name="Surgenor E.E."/>
            <person name="Formosa L.E."/>
            <person name="Reljic B."/>
            <person name="Frazier A.E."/>
            <person name="Dibley M.G."/>
            <person name="Osellame L.D."/>
            <person name="Stait T."/>
            <person name="Beilharz T.H."/>
            <person name="Thorburn D.R."/>
            <person name="Salim A."/>
            <person name="Ryan M.T."/>
        </authorList>
    </citation>
    <scope>FUNCTION</scope>
    <scope>IDENTIFICATION IN THE NADH-UBIQUINONE OXIDOREDUCTASE COMPLEX</scope>
</reference>
<reference key="15">
    <citation type="journal article" date="2019" name="Sci. Adv.">
        <title>BAP31 regulates mitochondrial function via interaction with Tom40 within ER-mitochondria contact sites.</title>
        <authorList>
            <person name="Namba T."/>
        </authorList>
    </citation>
    <scope>INTERACTION WITH BCAP31</scope>
    <scope>SUBCELLULAR LOCATION</scope>
</reference>
<reference key="16">
    <citation type="journal article" date="2016" name="PLoS Genet.">
        <title>A comprehensive genomic analysis reveals the genetic landscape of mitochondrial respiratory chain complex deficiencies.</title>
        <authorList>
            <person name="Kohda M."/>
            <person name="Tokuzawa Y."/>
            <person name="Kishita Y."/>
            <person name="Nyuzuki H."/>
            <person name="Moriyama Y."/>
            <person name="Mizuno Y."/>
            <person name="Hirata T."/>
            <person name="Yatsuka Y."/>
            <person name="Yamashita-Sugahara Y."/>
            <person name="Nakachi Y."/>
            <person name="Kato H."/>
            <person name="Okuda A."/>
            <person name="Tamaru S."/>
            <person name="Borna N.N."/>
            <person name="Banshoya K."/>
            <person name="Aigaki T."/>
            <person name="Sato-Miyata Y."/>
            <person name="Ohnuma K."/>
            <person name="Suzuki T."/>
            <person name="Nagao A."/>
            <person name="Maehata H."/>
            <person name="Matsuda F."/>
            <person name="Higasa K."/>
            <person name="Nagasaki M."/>
            <person name="Yasuda J."/>
            <person name="Yamamoto M."/>
            <person name="Fushimi T."/>
            <person name="Shimura M."/>
            <person name="Kaiho-Ichimoto K."/>
            <person name="Harashima H."/>
            <person name="Yamazaki T."/>
            <person name="Mori M."/>
            <person name="Murayama K."/>
            <person name="Ohtake A."/>
            <person name="Okazaki Y."/>
        </authorList>
    </citation>
    <scope>INVOLVEMENT IN MC1DN30</scope>
    <scope>VARIANT MC1DN30 LYS-121</scope>
</reference>
<organism>
    <name type="scientific">Homo sapiens</name>
    <name type="common">Human</name>
    <dbReference type="NCBI Taxonomy" id="9606"/>
    <lineage>
        <taxon>Eukaryota</taxon>
        <taxon>Metazoa</taxon>
        <taxon>Chordata</taxon>
        <taxon>Craniata</taxon>
        <taxon>Vertebrata</taxon>
        <taxon>Euteleostomi</taxon>
        <taxon>Mammalia</taxon>
        <taxon>Eutheria</taxon>
        <taxon>Euarchontoglires</taxon>
        <taxon>Primates</taxon>
        <taxon>Haplorrhini</taxon>
        <taxon>Catarrhini</taxon>
        <taxon>Hominidae</taxon>
        <taxon>Homo</taxon>
    </lineage>
</organism>
<dbReference type="EMBL" id="AF044213">
    <property type="protein sequence ID" value="AAL32064.1"/>
    <property type="molecule type" value="mRNA"/>
</dbReference>
<dbReference type="EMBL" id="AF251063">
    <property type="protein sequence ID" value="AAK34953.1"/>
    <property type="molecule type" value="mRNA"/>
</dbReference>
<dbReference type="EMBL" id="AK000501">
    <property type="protein sequence ID" value="BAA91208.1"/>
    <property type="molecule type" value="mRNA"/>
</dbReference>
<dbReference type="EMBL" id="AY359056">
    <property type="protein sequence ID" value="AAQ89415.1"/>
    <property type="molecule type" value="mRNA"/>
</dbReference>
<dbReference type="EMBL" id="CR457239">
    <property type="protein sequence ID" value="CAG33520.1"/>
    <property type="molecule type" value="mRNA"/>
</dbReference>
<dbReference type="EMBL" id="AL513366">
    <property type="status" value="NOT_ANNOTATED_CDS"/>
    <property type="molecule type" value="Genomic_DNA"/>
</dbReference>
<dbReference type="EMBL" id="BC010665">
    <property type="protein sequence ID" value="AAH10665.1"/>
    <property type="molecule type" value="mRNA"/>
</dbReference>
<dbReference type="EMBL" id="BC107805">
    <property type="protein sequence ID" value="AAI07806.1"/>
    <property type="molecule type" value="mRNA"/>
</dbReference>
<dbReference type="CCDS" id="CCDS14273.1">
    <molecule id="Q9NX14-2"/>
</dbReference>
<dbReference type="CCDS" id="CCDS48100.1">
    <molecule id="Q9NX14-1"/>
</dbReference>
<dbReference type="RefSeq" id="NP_001129470.1">
    <molecule id="Q9NX14-1"/>
    <property type="nucleotide sequence ID" value="NM_001135998.3"/>
</dbReference>
<dbReference type="RefSeq" id="NP_061929.2">
    <molecule id="Q9NX14-2"/>
    <property type="nucleotide sequence ID" value="NM_019056.6"/>
</dbReference>
<dbReference type="PDB" id="5XTC">
    <property type="method" value="EM"/>
    <property type="resolution" value="3.70 A"/>
    <property type="chains" value="e=54-150"/>
</dbReference>
<dbReference type="PDB" id="5XTD">
    <property type="method" value="EM"/>
    <property type="resolution" value="3.70 A"/>
    <property type="chains" value="e=54-150"/>
</dbReference>
<dbReference type="PDB" id="5XTH">
    <property type="method" value="EM"/>
    <property type="resolution" value="3.90 A"/>
    <property type="chains" value="e=54-150"/>
</dbReference>
<dbReference type="PDB" id="5XTI">
    <property type="method" value="EM"/>
    <property type="resolution" value="17.40 A"/>
    <property type="chains" value="Be/e=54-150"/>
</dbReference>
<dbReference type="PDBsum" id="5XTC"/>
<dbReference type="PDBsum" id="5XTD"/>
<dbReference type="PDBsum" id="5XTH"/>
<dbReference type="PDBsum" id="5XTI"/>
<dbReference type="SMR" id="Q9NX14"/>
<dbReference type="BioGRID" id="120026">
    <property type="interactions" value="110"/>
</dbReference>
<dbReference type="ComplexPortal" id="CPX-577">
    <property type="entry name" value="Mitochondrial respiratory chain complex I"/>
</dbReference>
<dbReference type="CORUM" id="Q9NX14"/>
<dbReference type="FunCoup" id="Q9NX14">
    <property type="interactions" value="1018"/>
</dbReference>
<dbReference type="IntAct" id="Q9NX14">
    <property type="interactions" value="79"/>
</dbReference>
<dbReference type="MINT" id="Q9NX14"/>
<dbReference type="STRING" id="9606.ENSP00000276062"/>
<dbReference type="BindingDB" id="Q9NX14"/>
<dbReference type="ChEMBL" id="CHEMBL2363065"/>
<dbReference type="DrugCentral" id="Q9NX14"/>
<dbReference type="CarbonylDB" id="Q9NX14"/>
<dbReference type="GlyGen" id="Q9NX14">
    <property type="glycosylation" value="1 site, 1 O-linked glycan (1 site)"/>
</dbReference>
<dbReference type="iPTMnet" id="Q9NX14"/>
<dbReference type="PhosphoSitePlus" id="Q9NX14"/>
<dbReference type="SwissPalm" id="Q9NX14"/>
<dbReference type="BioMuta" id="NDUFB11"/>
<dbReference type="DMDM" id="32469787"/>
<dbReference type="jPOST" id="Q9NX14"/>
<dbReference type="MassIVE" id="Q9NX14"/>
<dbReference type="PaxDb" id="9606-ENSP00000276062"/>
<dbReference type="PeptideAtlas" id="Q9NX14"/>
<dbReference type="ProteomicsDB" id="83021">
    <molecule id="Q9NX14-1"/>
</dbReference>
<dbReference type="ProteomicsDB" id="83022">
    <molecule id="Q9NX14-2"/>
</dbReference>
<dbReference type="Pumba" id="Q9NX14"/>
<dbReference type="TopDownProteomics" id="Q9NX14-1">
    <molecule id="Q9NX14-1"/>
</dbReference>
<dbReference type="TopDownProteomics" id="Q9NX14-2">
    <molecule id="Q9NX14-2"/>
</dbReference>
<dbReference type="Antibodypedia" id="25274">
    <property type="antibodies" value="184 antibodies from 24 providers"/>
</dbReference>
<dbReference type="DNASU" id="54539"/>
<dbReference type="Ensembl" id="ENST00000377811.4">
    <molecule id="Q9NX14-1"/>
    <property type="protein sequence ID" value="ENSP00000367042.3"/>
    <property type="gene ID" value="ENSG00000147123.12"/>
</dbReference>
<dbReference type="Ensembl" id="ENST00000687244.1">
    <molecule id="Q9NX14-2"/>
    <property type="protein sequence ID" value="ENSP00000509334.1"/>
    <property type="gene ID" value="ENSG00000147123.12"/>
</dbReference>
<dbReference type="GeneID" id="54539"/>
<dbReference type="KEGG" id="hsa:54539"/>
<dbReference type="MANE-Select" id="ENST00000377811.4">
    <property type="protein sequence ID" value="ENSP00000367042.3"/>
    <property type="RefSeq nucleotide sequence ID" value="NM_001135998.3"/>
    <property type="RefSeq protein sequence ID" value="NP_001129470.1"/>
</dbReference>
<dbReference type="UCSC" id="uc004dhc.4">
    <molecule id="Q9NX14-1"/>
    <property type="organism name" value="human"/>
</dbReference>
<dbReference type="AGR" id="HGNC:20372"/>
<dbReference type="CTD" id="54539"/>
<dbReference type="DisGeNET" id="54539"/>
<dbReference type="GeneCards" id="NDUFB11"/>
<dbReference type="GeneReviews" id="NDUFB11"/>
<dbReference type="HGNC" id="HGNC:20372">
    <property type="gene designation" value="NDUFB11"/>
</dbReference>
<dbReference type="HPA" id="ENSG00000147123">
    <property type="expression patterns" value="Tissue enhanced (skeletal)"/>
</dbReference>
<dbReference type="MalaCards" id="NDUFB11"/>
<dbReference type="MIM" id="300403">
    <property type="type" value="gene"/>
</dbReference>
<dbReference type="MIM" id="300952">
    <property type="type" value="phenotype"/>
</dbReference>
<dbReference type="MIM" id="301021">
    <property type="type" value="phenotype"/>
</dbReference>
<dbReference type="neXtProt" id="NX_Q9NX14"/>
<dbReference type="OpenTargets" id="ENSG00000147123"/>
<dbReference type="Orphanet" id="2609">
    <property type="disease" value="Isolated complex I deficiency"/>
</dbReference>
<dbReference type="Orphanet" id="2556">
    <property type="disease" value="Microphthalmia with linear skin defects syndrome"/>
</dbReference>
<dbReference type="PharmGKB" id="PA134924203"/>
<dbReference type="VEuPathDB" id="HostDB:ENSG00000147123"/>
<dbReference type="eggNOG" id="KOG4808">
    <property type="taxonomic scope" value="Eukaryota"/>
</dbReference>
<dbReference type="GeneTree" id="ENSGT00390000003022"/>
<dbReference type="HOGENOM" id="CLU_109862_0_0_1"/>
<dbReference type="InParanoid" id="Q9NX14"/>
<dbReference type="OMA" id="DYRMKEW"/>
<dbReference type="OrthoDB" id="5917019at2759"/>
<dbReference type="PAN-GO" id="Q9NX14">
    <property type="GO annotations" value="1 GO annotation based on evolutionary models"/>
</dbReference>
<dbReference type="PhylomeDB" id="Q9NX14"/>
<dbReference type="TreeFam" id="TF314671"/>
<dbReference type="BioCyc" id="MetaCyc:HS14193-MONOMER"/>
<dbReference type="PathwayCommons" id="Q9NX14"/>
<dbReference type="Reactome" id="R-HSA-611105">
    <property type="pathway name" value="Respiratory electron transport"/>
</dbReference>
<dbReference type="Reactome" id="R-HSA-6799198">
    <property type="pathway name" value="Complex I biogenesis"/>
</dbReference>
<dbReference type="SignaLink" id="Q9NX14"/>
<dbReference type="SIGNOR" id="Q9NX14"/>
<dbReference type="BioGRID-ORCS" id="54539">
    <property type="hits" value="92 hits in 787 CRISPR screens"/>
</dbReference>
<dbReference type="ChiTaRS" id="NDUFB11">
    <property type="organism name" value="human"/>
</dbReference>
<dbReference type="GeneWiki" id="NDUFB11"/>
<dbReference type="GenomeRNAi" id="54539"/>
<dbReference type="Pharos" id="Q9NX14">
    <property type="development level" value="Tclin"/>
</dbReference>
<dbReference type="PRO" id="PR:Q9NX14"/>
<dbReference type="Proteomes" id="UP000005640">
    <property type="component" value="Chromosome X"/>
</dbReference>
<dbReference type="RNAct" id="Q9NX14">
    <property type="molecule type" value="protein"/>
</dbReference>
<dbReference type="Bgee" id="ENSG00000147123">
    <property type="expression patterns" value="Expressed in apex of heart and 203 other cell types or tissues"/>
</dbReference>
<dbReference type="GO" id="GO:0005743">
    <property type="term" value="C:mitochondrial inner membrane"/>
    <property type="evidence" value="ECO:0000314"/>
    <property type="project" value="ComplexPortal"/>
</dbReference>
<dbReference type="GO" id="GO:0005739">
    <property type="term" value="C:mitochondrion"/>
    <property type="evidence" value="ECO:0000314"/>
    <property type="project" value="HPA"/>
</dbReference>
<dbReference type="GO" id="GO:0045271">
    <property type="term" value="C:respiratory chain complex I"/>
    <property type="evidence" value="ECO:0000314"/>
    <property type="project" value="UniProtKB"/>
</dbReference>
<dbReference type="GO" id="GO:0009060">
    <property type="term" value="P:aerobic respiration"/>
    <property type="evidence" value="ECO:0000303"/>
    <property type="project" value="ComplexPortal"/>
</dbReference>
<dbReference type="GO" id="GO:0042776">
    <property type="term" value="P:proton motive force-driven mitochondrial ATP synthesis"/>
    <property type="evidence" value="ECO:0000303"/>
    <property type="project" value="ComplexPortal"/>
</dbReference>
<dbReference type="InterPro" id="IPR019329">
    <property type="entry name" value="NADH_UbQ_OxRdtase_ESSS_su"/>
</dbReference>
<dbReference type="PANTHER" id="PTHR13327:SF0">
    <property type="entry name" value="NADH DEHYDROGENASE [UBIQUINONE] 1 BETA SUBCOMPLEX SUBUNIT 11, MITOCHONDRIAL"/>
    <property type="match status" value="1"/>
</dbReference>
<dbReference type="PANTHER" id="PTHR13327">
    <property type="entry name" value="NADH-UBIQUINONE OXIDOREDUCTASE ESSS SUBUNIT, MITOCHONDRIAL PRECURSOR"/>
    <property type="match status" value="1"/>
</dbReference>
<dbReference type="Pfam" id="PF10183">
    <property type="entry name" value="ESSS"/>
    <property type="match status" value="1"/>
</dbReference>
<accession>Q9NX14</accession>
<accession>Q5JRR3</accession>
<accession>Q5JRR4</accession>
<accession>Q6IAB6</accession>
<accession>Q8WZ96</accession>
<accession>Q9BXX9</accession>
<name>NDUBB_HUMAN</name>
<comment type="function">
    <text evidence="8">Accessory subunit of the mitochondrial membrane respiratory chain NADH dehydrogenase (Complex I), that is believed not to be involved in catalysis. Complex I functions in the transfer of electrons from NADH to the respiratory chain. The immediate electron acceptor for the enzyme is believed to be ubiquinone.</text>
</comment>
<comment type="subunit">
    <text evidence="4 8 9">Complex I is composed of 45 different subunits (PubMed:12611891, PubMed:27626371). Interacts with BCAP31 (PubMed:31206022).</text>
</comment>
<comment type="interaction">
    <interactant intactId="EBI-1246182">
        <id>Q9NX14</id>
    </interactant>
    <interactant intactId="EBI-740744">
        <id>O95471</id>
        <label>CLDN7</label>
    </interactant>
    <organismsDiffer>false</organismsDiffer>
    <experiments>3</experiments>
</comment>
<comment type="interaction">
    <interactant intactId="EBI-1246182">
        <id>Q9NX14</id>
    </interactant>
    <interactant intactId="EBI-3915253">
        <id>Q15125</id>
        <label>EBP</label>
    </interactant>
    <organismsDiffer>false</organismsDiffer>
    <experiments>3</experiments>
</comment>
<comment type="interaction">
    <interactant intactId="EBI-1246182">
        <id>Q9NX14</id>
    </interactant>
    <interactant intactId="EBI-743099">
        <id>Q969F0</id>
        <label>FATE1</label>
    </interactant>
    <organismsDiffer>false</organismsDiffer>
    <experiments>6</experiments>
</comment>
<comment type="interaction">
    <interactant intactId="EBI-1246182">
        <id>Q9NX14</id>
    </interactant>
    <interactant intactId="EBI-17565645">
        <id>P08034</id>
        <label>GJB1</label>
    </interactant>
    <organismsDiffer>false</organismsDiffer>
    <experiments>3</experiments>
</comment>
<comment type="interaction">
    <interactant intactId="EBI-1246182">
        <id>Q9NX14</id>
    </interactant>
    <interactant intactId="EBI-17935713">
        <id>Q96P66</id>
        <label>GPR101</label>
    </interactant>
    <organismsDiffer>false</organismsDiffer>
    <experiments>3</experiments>
</comment>
<comment type="interaction">
    <interactant intactId="EBI-1246182">
        <id>Q9NX14</id>
    </interactant>
    <interactant intactId="EBI-13345167">
        <id>Q8TDT2</id>
        <label>GPR152</label>
    </interactant>
    <organismsDiffer>false</organismsDiffer>
    <experiments>3</experiments>
</comment>
<comment type="interaction">
    <interactant intactId="EBI-1246182">
        <id>Q9NX14</id>
    </interactant>
    <interactant intactId="EBI-18076404">
        <id>O15529</id>
        <label>GPR42</label>
    </interactant>
    <organismsDiffer>false</organismsDiffer>
    <experiments>3</experiments>
</comment>
<comment type="interaction">
    <interactant intactId="EBI-1246182">
        <id>Q9NX14</id>
    </interactant>
    <interactant intactId="EBI-11427100">
        <id>P31937</id>
        <label>HIBADH</label>
    </interactant>
    <organismsDiffer>false</organismsDiffer>
    <experiments>3</experiments>
</comment>
<comment type="interaction">
    <interactant intactId="EBI-1246182">
        <id>Q9NX14</id>
    </interactant>
    <interactant intactId="EBI-6268651">
        <id>Q9NPL8</id>
        <label>TIMMDC1</label>
    </interactant>
    <organismsDiffer>false</organismsDiffer>
    <experiments>4</experiments>
</comment>
<comment type="subcellular location">
    <subcellularLocation>
        <location evidence="9 13">Mitochondrion inner membrane</location>
        <topology evidence="12">Single-pass membrane protein</topology>
    </subcellularLocation>
    <text evidence="9">The interaction with BCAP31 mediates mitochondria localization.</text>
</comment>
<comment type="alternative products">
    <event type="alternative splicing"/>
    <isoform>
        <id>Q9NX14-1</id>
        <name>1</name>
        <sequence type="displayed"/>
    </isoform>
    <isoform>
        <id>Q9NX14-2</id>
        <name>2</name>
        <sequence type="described" ref="VSP_018251"/>
    </isoform>
</comment>
<comment type="tissue specificity">
    <text>Ubiquitous.</text>
</comment>
<comment type="disease" evidence="5">
    <disease id="DI-04409">
        <name>Linear skin defects with multiple congenital anomalies 3</name>
        <acronym>LSDMCA3</acronym>
        <description>A disorder characterized by dermal, ocular, neurological and cardiac abnormalities. LSDMCA3 clinical features include linear skin defects on face and neck at birth, lacrimal duct atresia, myopia, nystagmus, strabismus, cardiomyopathy, axial hypotonia, seizures, corpus callosum agenesis, and dilation of lateral ventricles.</description>
        <dbReference type="MIM" id="300952"/>
    </disease>
    <text>The disease is caused by variants affecting the gene represented in this entry.</text>
</comment>
<comment type="disease" evidence="7">
    <disease id="DI-05400">
        <name>Mitochondrial complex I deficiency, nuclear type 30</name>
        <acronym>MC1DN30</acronym>
        <description>A form of mitochondrial complex I deficiency, the most common biochemical signature of mitochondrial disorders, a group of highly heterogeneous conditions characterized by defective oxidative phosphorylation, which collectively affects 1 in 5-10000 live births. Clinical disorders have variable severity, ranging from lethal neonatal disease to adult-onset neurodegenerative disorders. Phenotypes include macrocephaly with progressive leukodystrophy, non-specific encephalopathy, cardiomyopathy, myopathy, liver disease, Leigh syndrome, Leber hereditary optic neuropathy, and some forms of Parkinson disease.</description>
        <dbReference type="MIM" id="301021"/>
    </disease>
    <text>The disease may be caused by variants affecting the gene represented in this entry.</text>
</comment>
<comment type="similarity">
    <text evidence="12">Belongs to the complex I NDUFB11 subunit family.</text>
</comment>
<keyword id="KW-0002">3D-structure</keyword>
<keyword id="KW-0025">Alternative splicing</keyword>
<keyword id="KW-0122">Cardiomyopathy</keyword>
<keyword id="KW-0225">Disease variant</keyword>
<keyword id="KW-0249">Electron transport</keyword>
<keyword id="KW-0472">Membrane</keyword>
<keyword id="KW-0496">Mitochondrion</keyword>
<keyword id="KW-0999">Mitochondrion inner membrane</keyword>
<keyword id="KW-1274">Primary mitochondrial disease</keyword>
<keyword id="KW-1267">Proteomics identification</keyword>
<keyword id="KW-1185">Reference proteome</keyword>
<keyword id="KW-0679">Respiratory chain</keyword>
<keyword id="KW-0809">Transit peptide</keyword>
<keyword id="KW-0812">Transmembrane</keyword>
<keyword id="KW-1133">Transmembrane helix</keyword>
<keyword id="KW-0813">Transport</keyword>
<gene>
    <name type="primary">NDUFB11</name>
    <name type="ORF">UNQ111/PRO1064</name>
</gene>
<evidence type="ECO:0000250" key="1"/>
<evidence type="ECO:0000255" key="2"/>
<evidence type="ECO:0000256" key="3">
    <source>
        <dbReference type="SAM" id="MobiDB-lite"/>
    </source>
</evidence>
<evidence type="ECO:0000269" key="4">
    <source>
    </source>
</evidence>
<evidence type="ECO:0000269" key="5">
    <source>
    </source>
</evidence>
<evidence type="ECO:0000269" key="6">
    <source>
    </source>
</evidence>
<evidence type="ECO:0000269" key="7">
    <source>
    </source>
</evidence>
<evidence type="ECO:0000269" key="8">
    <source>
    </source>
</evidence>
<evidence type="ECO:0000269" key="9">
    <source>
    </source>
</evidence>
<evidence type="ECO:0000303" key="10">
    <source>
    </source>
</evidence>
<evidence type="ECO:0000303" key="11">
    <source ref="2"/>
</evidence>
<evidence type="ECO:0000305" key="12"/>
<evidence type="ECO:0000305" key="13">
    <source>
    </source>
</evidence>